<keyword id="KW-0963">Cytoplasm</keyword>
<keyword id="KW-0227">DNA damage</keyword>
<keyword id="KW-0233">DNA recombination</keyword>
<keyword id="KW-0234">DNA repair</keyword>
<keyword id="KW-0238">DNA-binding</keyword>
<keyword id="KW-0255">Endonuclease</keyword>
<keyword id="KW-0378">Hydrolase</keyword>
<keyword id="KW-0460">Magnesium</keyword>
<keyword id="KW-0479">Metal-binding</keyword>
<keyword id="KW-0540">Nuclease</keyword>
<accession>B5YFL3</accession>
<sequence>MIVIGFDPGTAITGYGILNKEDDKIAVIEYGALTTPSNWSIGRRLNYLFDQVSSLLDLYNPDAVVMEEVFFNKNIKTAISIGQAQGVIILAAQQHQREVSILTPLEVKLSVVGYGRATKDQVQYMVKEVLKLKDIPKPDDVADALALCISYIYKQEGC</sequence>
<evidence type="ECO:0000255" key="1">
    <source>
        <dbReference type="HAMAP-Rule" id="MF_00034"/>
    </source>
</evidence>
<proteinExistence type="inferred from homology"/>
<dbReference type="EC" id="3.1.21.10" evidence="1"/>
<dbReference type="EMBL" id="CP001146">
    <property type="protein sequence ID" value="ACI18395.1"/>
    <property type="molecule type" value="Genomic_DNA"/>
</dbReference>
<dbReference type="RefSeq" id="WP_012547027.1">
    <property type="nucleotide sequence ID" value="NC_011297.1"/>
</dbReference>
<dbReference type="SMR" id="B5YFL3"/>
<dbReference type="STRING" id="309799.DICTH_1504"/>
<dbReference type="PaxDb" id="309799-DICTH_1504"/>
<dbReference type="KEGG" id="dth:DICTH_1504"/>
<dbReference type="eggNOG" id="COG0817">
    <property type="taxonomic scope" value="Bacteria"/>
</dbReference>
<dbReference type="HOGENOM" id="CLU_091257_3_1_0"/>
<dbReference type="OrthoDB" id="9805499at2"/>
<dbReference type="Proteomes" id="UP000001733">
    <property type="component" value="Chromosome"/>
</dbReference>
<dbReference type="GO" id="GO:0005737">
    <property type="term" value="C:cytoplasm"/>
    <property type="evidence" value="ECO:0007669"/>
    <property type="project" value="UniProtKB-SubCell"/>
</dbReference>
<dbReference type="GO" id="GO:0048476">
    <property type="term" value="C:Holliday junction resolvase complex"/>
    <property type="evidence" value="ECO:0007669"/>
    <property type="project" value="UniProtKB-UniRule"/>
</dbReference>
<dbReference type="GO" id="GO:0008821">
    <property type="term" value="F:crossover junction DNA endonuclease activity"/>
    <property type="evidence" value="ECO:0007669"/>
    <property type="project" value="UniProtKB-UniRule"/>
</dbReference>
<dbReference type="GO" id="GO:0003677">
    <property type="term" value="F:DNA binding"/>
    <property type="evidence" value="ECO:0007669"/>
    <property type="project" value="UniProtKB-KW"/>
</dbReference>
<dbReference type="GO" id="GO:0000287">
    <property type="term" value="F:magnesium ion binding"/>
    <property type="evidence" value="ECO:0007669"/>
    <property type="project" value="UniProtKB-UniRule"/>
</dbReference>
<dbReference type="GO" id="GO:0006310">
    <property type="term" value="P:DNA recombination"/>
    <property type="evidence" value="ECO:0007669"/>
    <property type="project" value="UniProtKB-UniRule"/>
</dbReference>
<dbReference type="GO" id="GO:0006281">
    <property type="term" value="P:DNA repair"/>
    <property type="evidence" value="ECO:0007669"/>
    <property type="project" value="UniProtKB-UniRule"/>
</dbReference>
<dbReference type="CDD" id="cd16962">
    <property type="entry name" value="RuvC"/>
    <property type="match status" value="1"/>
</dbReference>
<dbReference type="FunFam" id="3.30.420.10:FF:000002">
    <property type="entry name" value="Crossover junction endodeoxyribonuclease RuvC"/>
    <property type="match status" value="1"/>
</dbReference>
<dbReference type="Gene3D" id="3.30.420.10">
    <property type="entry name" value="Ribonuclease H-like superfamily/Ribonuclease H"/>
    <property type="match status" value="1"/>
</dbReference>
<dbReference type="HAMAP" id="MF_00034">
    <property type="entry name" value="RuvC"/>
    <property type="match status" value="1"/>
</dbReference>
<dbReference type="InterPro" id="IPR012337">
    <property type="entry name" value="RNaseH-like_sf"/>
</dbReference>
<dbReference type="InterPro" id="IPR036397">
    <property type="entry name" value="RNaseH_sf"/>
</dbReference>
<dbReference type="InterPro" id="IPR020563">
    <property type="entry name" value="X-over_junc_endoDNase_Mg_BS"/>
</dbReference>
<dbReference type="InterPro" id="IPR002176">
    <property type="entry name" value="X-over_junc_endoDNase_RuvC"/>
</dbReference>
<dbReference type="NCBIfam" id="NF000711">
    <property type="entry name" value="PRK00039.2-1"/>
    <property type="match status" value="1"/>
</dbReference>
<dbReference type="NCBIfam" id="TIGR00228">
    <property type="entry name" value="ruvC"/>
    <property type="match status" value="1"/>
</dbReference>
<dbReference type="PANTHER" id="PTHR30194">
    <property type="entry name" value="CROSSOVER JUNCTION ENDODEOXYRIBONUCLEASE RUVC"/>
    <property type="match status" value="1"/>
</dbReference>
<dbReference type="PANTHER" id="PTHR30194:SF3">
    <property type="entry name" value="CROSSOVER JUNCTION ENDODEOXYRIBONUCLEASE RUVC"/>
    <property type="match status" value="1"/>
</dbReference>
<dbReference type="Pfam" id="PF02075">
    <property type="entry name" value="RuvC"/>
    <property type="match status" value="1"/>
</dbReference>
<dbReference type="PRINTS" id="PR00696">
    <property type="entry name" value="RSOLVASERUVC"/>
</dbReference>
<dbReference type="SUPFAM" id="SSF53098">
    <property type="entry name" value="Ribonuclease H-like"/>
    <property type="match status" value="1"/>
</dbReference>
<dbReference type="PROSITE" id="PS01321">
    <property type="entry name" value="RUVC"/>
    <property type="match status" value="1"/>
</dbReference>
<feature type="chain" id="PRO_1000090521" description="Crossover junction endodeoxyribonuclease RuvC">
    <location>
        <begin position="1"/>
        <end position="158"/>
    </location>
</feature>
<feature type="active site" evidence="1">
    <location>
        <position position="7"/>
    </location>
</feature>
<feature type="active site" evidence="1">
    <location>
        <position position="67"/>
    </location>
</feature>
<feature type="active site" evidence="1">
    <location>
        <position position="140"/>
    </location>
</feature>
<feature type="binding site" evidence="1">
    <location>
        <position position="7"/>
    </location>
    <ligand>
        <name>Mg(2+)</name>
        <dbReference type="ChEBI" id="CHEBI:18420"/>
        <label>1</label>
    </ligand>
</feature>
<feature type="binding site" evidence="1">
    <location>
        <position position="67"/>
    </location>
    <ligand>
        <name>Mg(2+)</name>
        <dbReference type="ChEBI" id="CHEBI:18420"/>
        <label>2</label>
    </ligand>
</feature>
<feature type="binding site" evidence="1">
    <location>
        <position position="140"/>
    </location>
    <ligand>
        <name>Mg(2+)</name>
        <dbReference type="ChEBI" id="CHEBI:18420"/>
        <label>1</label>
    </ligand>
</feature>
<name>RUVC_DICT6</name>
<reference key="1">
    <citation type="journal article" date="2014" name="Genome Announc.">
        <title>Complete Genome Sequence of the Extreme Thermophile Dictyoglomus thermophilum H-6-12.</title>
        <authorList>
            <person name="Coil D.A."/>
            <person name="Badger J.H."/>
            <person name="Forberger H.C."/>
            <person name="Riggs F."/>
            <person name="Madupu R."/>
            <person name="Fedorova N."/>
            <person name="Ward N."/>
            <person name="Robb F.T."/>
            <person name="Eisen J.A."/>
        </authorList>
    </citation>
    <scope>NUCLEOTIDE SEQUENCE [LARGE SCALE GENOMIC DNA]</scope>
    <source>
        <strain>ATCC 35947 / DSM 3960 / H-6-12</strain>
    </source>
</reference>
<organism>
    <name type="scientific">Dictyoglomus thermophilum (strain ATCC 35947 / DSM 3960 / H-6-12)</name>
    <dbReference type="NCBI Taxonomy" id="309799"/>
    <lineage>
        <taxon>Bacteria</taxon>
        <taxon>Pseudomonadati</taxon>
        <taxon>Dictyoglomota</taxon>
        <taxon>Dictyoglomia</taxon>
        <taxon>Dictyoglomales</taxon>
        <taxon>Dictyoglomaceae</taxon>
        <taxon>Dictyoglomus</taxon>
    </lineage>
</organism>
<protein>
    <recommendedName>
        <fullName evidence="1">Crossover junction endodeoxyribonuclease RuvC</fullName>
        <ecNumber evidence="1">3.1.21.10</ecNumber>
    </recommendedName>
    <alternativeName>
        <fullName evidence="1">Holliday junction nuclease RuvC</fullName>
    </alternativeName>
    <alternativeName>
        <fullName evidence="1">Holliday junction resolvase RuvC</fullName>
    </alternativeName>
</protein>
<comment type="function">
    <text evidence="1">The RuvA-RuvB-RuvC complex processes Holliday junction (HJ) DNA during genetic recombination and DNA repair. Endonuclease that resolves HJ intermediates. Cleaves cruciform DNA by making single-stranded nicks across the HJ at symmetrical positions within the homologous arms, yielding a 5'-phosphate and a 3'-hydroxyl group; requires a central core of homology in the junction. The consensus cleavage sequence is 5'-(A/T)TT(C/G)-3'. Cleavage occurs on the 3'-side of the TT dinucleotide at the point of strand exchange. HJ branch migration catalyzed by RuvA-RuvB allows RuvC to scan DNA until it finds its consensus sequence, where it cleaves and resolves the cruciform DNA.</text>
</comment>
<comment type="catalytic activity">
    <reaction evidence="1">
        <text>Endonucleolytic cleavage at a junction such as a reciprocal single-stranded crossover between two homologous DNA duplexes (Holliday junction).</text>
        <dbReference type="EC" id="3.1.21.10"/>
    </reaction>
</comment>
<comment type="cofactor">
    <cofactor evidence="1">
        <name>Mg(2+)</name>
        <dbReference type="ChEBI" id="CHEBI:18420"/>
    </cofactor>
    <text evidence="1">Binds 2 Mg(2+) ion per subunit.</text>
</comment>
<comment type="subunit">
    <text evidence="1">Homodimer which binds Holliday junction (HJ) DNA. The HJ becomes 2-fold symmetrical on binding to RuvC with unstacked arms; it has a different conformation from HJ DNA in complex with RuvA. In the full resolvosome a probable DNA-RuvA(4)-RuvB(12)-RuvC(2) complex forms which resolves the HJ.</text>
</comment>
<comment type="subcellular location">
    <subcellularLocation>
        <location evidence="1">Cytoplasm</location>
    </subcellularLocation>
</comment>
<comment type="similarity">
    <text evidence="1">Belongs to the RuvC family.</text>
</comment>
<gene>
    <name evidence="1" type="primary">ruvC</name>
    <name type="ordered locus">DICTH_1504</name>
</gene>